<dbReference type="EMBL" id="CP000269">
    <property type="protein sequence ID" value="ABR88618.1"/>
    <property type="molecule type" value="Genomic_DNA"/>
</dbReference>
<dbReference type="RefSeq" id="WP_012081529.1">
    <property type="nucleotide sequence ID" value="NC_009659.1"/>
</dbReference>
<dbReference type="SMR" id="A6T4D7"/>
<dbReference type="STRING" id="375286.mma_3694"/>
<dbReference type="KEGG" id="mms:mma_3694"/>
<dbReference type="eggNOG" id="COG0706">
    <property type="taxonomic scope" value="Bacteria"/>
</dbReference>
<dbReference type="HOGENOM" id="CLU_016535_3_0_4"/>
<dbReference type="OrthoDB" id="9780552at2"/>
<dbReference type="Proteomes" id="UP000006388">
    <property type="component" value="Chromosome"/>
</dbReference>
<dbReference type="GO" id="GO:0005886">
    <property type="term" value="C:plasma membrane"/>
    <property type="evidence" value="ECO:0007669"/>
    <property type="project" value="UniProtKB-SubCell"/>
</dbReference>
<dbReference type="GO" id="GO:0032977">
    <property type="term" value="F:membrane insertase activity"/>
    <property type="evidence" value="ECO:0007669"/>
    <property type="project" value="InterPro"/>
</dbReference>
<dbReference type="GO" id="GO:0051205">
    <property type="term" value="P:protein insertion into membrane"/>
    <property type="evidence" value="ECO:0007669"/>
    <property type="project" value="TreeGrafter"/>
</dbReference>
<dbReference type="GO" id="GO:0015031">
    <property type="term" value="P:protein transport"/>
    <property type="evidence" value="ECO:0007669"/>
    <property type="project" value="UniProtKB-KW"/>
</dbReference>
<dbReference type="CDD" id="cd20070">
    <property type="entry name" value="5TM_YidC_Alb3"/>
    <property type="match status" value="1"/>
</dbReference>
<dbReference type="CDD" id="cd19961">
    <property type="entry name" value="EcYidC-like_peri"/>
    <property type="match status" value="1"/>
</dbReference>
<dbReference type="Gene3D" id="2.70.98.90">
    <property type="match status" value="1"/>
</dbReference>
<dbReference type="HAMAP" id="MF_01810">
    <property type="entry name" value="YidC_type1"/>
    <property type="match status" value="1"/>
</dbReference>
<dbReference type="InterPro" id="IPR019998">
    <property type="entry name" value="Membr_insert_YidC"/>
</dbReference>
<dbReference type="InterPro" id="IPR028053">
    <property type="entry name" value="Membr_insert_YidC_N"/>
</dbReference>
<dbReference type="InterPro" id="IPR001708">
    <property type="entry name" value="YidC/ALB3/OXA1/COX18"/>
</dbReference>
<dbReference type="InterPro" id="IPR028055">
    <property type="entry name" value="YidC/Oxa/ALB_C"/>
</dbReference>
<dbReference type="InterPro" id="IPR047196">
    <property type="entry name" value="YidC_ALB_C"/>
</dbReference>
<dbReference type="InterPro" id="IPR038221">
    <property type="entry name" value="YidC_periplasmic_sf"/>
</dbReference>
<dbReference type="NCBIfam" id="NF002352">
    <property type="entry name" value="PRK01318.1-3"/>
    <property type="match status" value="1"/>
</dbReference>
<dbReference type="NCBIfam" id="NF002353">
    <property type="entry name" value="PRK01318.1-4"/>
    <property type="match status" value="1"/>
</dbReference>
<dbReference type="NCBIfam" id="TIGR03593">
    <property type="entry name" value="yidC_nterm"/>
    <property type="match status" value="1"/>
</dbReference>
<dbReference type="NCBIfam" id="TIGR03592">
    <property type="entry name" value="yidC_oxa1_cterm"/>
    <property type="match status" value="1"/>
</dbReference>
<dbReference type="PANTHER" id="PTHR12428:SF65">
    <property type="entry name" value="CYTOCHROME C OXIDASE ASSEMBLY PROTEIN COX18, MITOCHONDRIAL"/>
    <property type="match status" value="1"/>
</dbReference>
<dbReference type="PANTHER" id="PTHR12428">
    <property type="entry name" value="OXA1"/>
    <property type="match status" value="1"/>
</dbReference>
<dbReference type="Pfam" id="PF02096">
    <property type="entry name" value="60KD_IMP"/>
    <property type="match status" value="1"/>
</dbReference>
<dbReference type="Pfam" id="PF14849">
    <property type="entry name" value="YidC_periplas"/>
    <property type="match status" value="1"/>
</dbReference>
<dbReference type="PRINTS" id="PR00701">
    <property type="entry name" value="60KDINNERMP"/>
</dbReference>
<dbReference type="PRINTS" id="PR01900">
    <property type="entry name" value="YIDCPROTEIN"/>
</dbReference>
<keyword id="KW-0997">Cell inner membrane</keyword>
<keyword id="KW-1003">Cell membrane</keyword>
<keyword id="KW-0143">Chaperone</keyword>
<keyword id="KW-0472">Membrane</keyword>
<keyword id="KW-0653">Protein transport</keyword>
<keyword id="KW-0812">Transmembrane</keyword>
<keyword id="KW-1133">Transmembrane helix</keyword>
<keyword id="KW-0813">Transport</keyword>
<protein>
    <recommendedName>
        <fullName evidence="1">Membrane protein insertase YidC</fullName>
    </recommendedName>
    <alternativeName>
        <fullName evidence="1">Foldase YidC</fullName>
    </alternativeName>
    <alternativeName>
        <fullName evidence="1">Membrane integrase YidC</fullName>
    </alternativeName>
    <alternativeName>
        <fullName evidence="1">Membrane protein YidC</fullName>
    </alternativeName>
</protein>
<name>YIDC_JANMA</name>
<sequence>MDIKRTVLWVVFSFSLLMLWDNYNRYTGKPSIFFDNPTTQAAKPAAATDDGKTAAAPTADVPTSSAHAANATGVPDSVAPTKSEIVTITTDLIKADIDTVGGEIRHLELLTHHESSDSTKDIVLFDSTPPRTYLGQTGLIGGAYPNHKSLFTVRPGPRSLEAGDQVQLVLEAEQNGVKLVKTYTFKRGEYKIDIKHDVINKTAAAINPSLYLQLVRDGSKLNNESMFYSTFTGPAVYSDSDKFQKVTFESIEKGKIEHVVKAESGWIAMVQHYFVSAFVPPANVPREYFTKKLATNLYAVGAIMPMGAVAPGATQSMDATLYSGPQESKRLEAVAPGFELVKDYGWLTIIAKPIFWLMIQIHQLLGNWGWTIVVLTIVIKLAFFPLSAASYRSMAKMKLVTPKMTEIRTKYKGEPQKMNAAMMELYKKEKINPLGGCMPIVIQIPVFISLYWVLLASVEMRNAPWLWISDLASPDTLFGSYMIGSFHLTIGILPILMAISMFIQTKLNPTPPDPIQAKVMMFMPIAFSLMFFFFPAGLVLYWVVNNILSIAQQWTISKKMGIVN</sequence>
<evidence type="ECO:0000255" key="1">
    <source>
        <dbReference type="HAMAP-Rule" id="MF_01810"/>
    </source>
</evidence>
<evidence type="ECO:0000256" key="2">
    <source>
        <dbReference type="SAM" id="MobiDB-lite"/>
    </source>
</evidence>
<accession>A6T4D7</accession>
<reference key="1">
    <citation type="journal article" date="2007" name="PLoS Genet.">
        <title>Genome analysis of Minibacterium massiliensis highlights the convergent evolution of water-living bacteria.</title>
        <authorList>
            <person name="Audic S."/>
            <person name="Robert C."/>
            <person name="Campagna B."/>
            <person name="Parinello H."/>
            <person name="Claverie J.-M."/>
            <person name="Raoult D."/>
            <person name="Drancourt M."/>
        </authorList>
    </citation>
    <scope>NUCLEOTIDE SEQUENCE [LARGE SCALE GENOMIC DNA]</scope>
    <source>
        <strain>Marseille</strain>
    </source>
</reference>
<proteinExistence type="inferred from homology"/>
<gene>
    <name evidence="1" type="primary">yidC</name>
    <name type="ordered locus">mma_3694</name>
</gene>
<organism>
    <name type="scientific">Janthinobacterium sp. (strain Marseille)</name>
    <name type="common">Minibacterium massiliensis</name>
    <dbReference type="NCBI Taxonomy" id="375286"/>
    <lineage>
        <taxon>Bacteria</taxon>
        <taxon>Pseudomonadati</taxon>
        <taxon>Pseudomonadota</taxon>
        <taxon>Betaproteobacteria</taxon>
        <taxon>Burkholderiales</taxon>
        <taxon>Oxalobacteraceae</taxon>
        <taxon>Janthinobacterium</taxon>
    </lineage>
</organism>
<comment type="function">
    <text evidence="1">Required for the insertion and/or proper folding and/or complex formation of integral membrane proteins into the membrane. Involved in integration of membrane proteins that insert both dependently and independently of the Sec translocase complex, as well as at least some lipoproteins. Aids folding of multispanning membrane proteins.</text>
</comment>
<comment type="subunit">
    <text evidence="1">Interacts with the Sec translocase complex via SecD. Specifically interacts with transmembrane segments of nascent integral membrane proteins during membrane integration.</text>
</comment>
<comment type="subcellular location">
    <subcellularLocation>
        <location evidence="1">Cell inner membrane</location>
        <topology evidence="1">Multi-pass membrane protein</topology>
    </subcellularLocation>
</comment>
<comment type="similarity">
    <text evidence="1">Belongs to the OXA1/ALB3/YidC family. Type 1 subfamily.</text>
</comment>
<feature type="chain" id="PRO_1000070109" description="Membrane protein insertase YidC">
    <location>
        <begin position="1"/>
        <end position="564"/>
    </location>
</feature>
<feature type="transmembrane region" description="Helical" evidence="1">
    <location>
        <begin position="7"/>
        <end position="24"/>
    </location>
</feature>
<feature type="transmembrane region" description="Helical" evidence="1">
    <location>
        <begin position="293"/>
        <end position="313"/>
    </location>
</feature>
<feature type="transmembrane region" description="Helical" evidence="1">
    <location>
        <begin position="341"/>
        <end position="361"/>
    </location>
</feature>
<feature type="transmembrane region" description="Helical" evidence="1">
    <location>
        <begin position="364"/>
        <end position="384"/>
    </location>
</feature>
<feature type="transmembrane region" description="Helical" evidence="1">
    <location>
        <begin position="438"/>
        <end position="458"/>
    </location>
</feature>
<feature type="transmembrane region" description="Helical" evidence="1">
    <location>
        <begin position="483"/>
        <end position="503"/>
    </location>
</feature>
<feature type="transmembrane region" description="Helical" evidence="1">
    <location>
        <begin position="524"/>
        <end position="544"/>
    </location>
</feature>
<feature type="region of interest" description="Disordered" evidence="2">
    <location>
        <begin position="43"/>
        <end position="76"/>
    </location>
</feature>
<feature type="compositionally biased region" description="Low complexity" evidence="2">
    <location>
        <begin position="43"/>
        <end position="60"/>
    </location>
</feature>